<protein>
    <recommendedName>
        <fullName evidence="1">Cysteate synthase</fullName>
        <shortName evidence="1">CS</shortName>
        <shortName evidence="1">Cya synthase</shortName>
        <ecNumber evidence="1">2.5.1.76</ecNumber>
    </recommendedName>
</protein>
<dbReference type="EC" id="2.5.1.76" evidence="1"/>
<dbReference type="EMBL" id="CP000099">
    <property type="protein sequence ID" value="AAZ72410.1"/>
    <property type="molecule type" value="Genomic_DNA"/>
</dbReference>
<dbReference type="SMR" id="Q465N2"/>
<dbReference type="STRING" id="269797.Mbar_A3541"/>
<dbReference type="PaxDb" id="269797-Mbar_A3541"/>
<dbReference type="KEGG" id="mba:Mbar_A3541"/>
<dbReference type="eggNOG" id="arCOG01434">
    <property type="taxonomic scope" value="Archaea"/>
</dbReference>
<dbReference type="HOGENOM" id="CLU_666687_0_0_2"/>
<dbReference type="OrthoDB" id="6371at2157"/>
<dbReference type="UniPathway" id="UPA00355"/>
<dbReference type="GO" id="GO:0005524">
    <property type="term" value="F:ATP binding"/>
    <property type="evidence" value="ECO:0007669"/>
    <property type="project" value="TreeGrafter"/>
</dbReference>
<dbReference type="GO" id="GO:0044686">
    <property type="term" value="F:cysteate synthase activity"/>
    <property type="evidence" value="ECO:0007669"/>
    <property type="project" value="UniProtKB-UniRule"/>
</dbReference>
<dbReference type="GO" id="GO:0003941">
    <property type="term" value="F:L-serine ammonia-lyase activity"/>
    <property type="evidence" value="ECO:0007669"/>
    <property type="project" value="TreeGrafter"/>
</dbReference>
<dbReference type="GO" id="GO:0000287">
    <property type="term" value="F:magnesium ion binding"/>
    <property type="evidence" value="ECO:0007669"/>
    <property type="project" value="TreeGrafter"/>
</dbReference>
<dbReference type="GO" id="GO:0030170">
    <property type="term" value="F:pyridoxal phosphate binding"/>
    <property type="evidence" value="ECO:0007669"/>
    <property type="project" value="UniProtKB-UniRule"/>
</dbReference>
<dbReference type="GO" id="GO:0030378">
    <property type="term" value="F:serine racemase activity"/>
    <property type="evidence" value="ECO:0007669"/>
    <property type="project" value="TreeGrafter"/>
</dbReference>
<dbReference type="GO" id="GO:0018114">
    <property type="term" value="F:threonine racemase activity"/>
    <property type="evidence" value="ECO:0007669"/>
    <property type="project" value="TreeGrafter"/>
</dbReference>
<dbReference type="GO" id="GO:0019295">
    <property type="term" value="P:coenzyme M biosynthetic process"/>
    <property type="evidence" value="ECO:0007669"/>
    <property type="project" value="UniProtKB-UniRule"/>
</dbReference>
<dbReference type="GO" id="GO:0070179">
    <property type="term" value="P:D-serine biosynthetic process"/>
    <property type="evidence" value="ECO:0007669"/>
    <property type="project" value="TreeGrafter"/>
</dbReference>
<dbReference type="Gene3D" id="3.40.50.1100">
    <property type="match status" value="2"/>
</dbReference>
<dbReference type="HAMAP" id="MF_02109">
    <property type="entry name" value="Cya_synthase"/>
    <property type="match status" value="1"/>
</dbReference>
<dbReference type="InterPro" id="IPR022401">
    <property type="entry name" value="Cysteate_synthase"/>
</dbReference>
<dbReference type="InterPro" id="IPR001926">
    <property type="entry name" value="TrpB-like_PALP"/>
</dbReference>
<dbReference type="InterPro" id="IPR036052">
    <property type="entry name" value="TrpB-like_PALP_sf"/>
</dbReference>
<dbReference type="NCBIfam" id="TIGR03844">
    <property type="entry name" value="cysteate_syn"/>
    <property type="match status" value="1"/>
</dbReference>
<dbReference type="PANTHER" id="PTHR43050">
    <property type="entry name" value="SERINE / THREONINE RACEMASE FAMILY MEMBER"/>
    <property type="match status" value="1"/>
</dbReference>
<dbReference type="PANTHER" id="PTHR43050:SF1">
    <property type="entry name" value="SERINE RACEMASE"/>
    <property type="match status" value="1"/>
</dbReference>
<dbReference type="Pfam" id="PF00291">
    <property type="entry name" value="PALP"/>
    <property type="match status" value="1"/>
</dbReference>
<dbReference type="SUPFAM" id="SSF53686">
    <property type="entry name" value="Tryptophan synthase beta subunit-like PLP-dependent enzymes"/>
    <property type="match status" value="1"/>
</dbReference>
<gene>
    <name type="ordered locus">Mbar_A3541</name>
</gene>
<sequence>MGNFKLKCLKCGREYGQEYRLTCENDNAFLRAEYSEKRLVLRNQPGIGRFHSWLPVQEELTTDAGPITYKSEAFARELGLSNLYIGFSGYWPERGAFIKTCSFKELEAHPTMQLLKETGGKAVVLASAGNTGRAFAHVSALTGTDVYIVVPESGASKLWLPEEPTESVHLISMSPGNDYTDAINLAGRIAKLPGMVSEGGARNIARRDGMGTVMLDAAVTIGKMPDHYFQAVGSGTGGISVWEAAMRLRTDGRFGQKLPKLQLAQNLPFVPMYNAWQEKRREIIPELDMKDAKKQVEETYATVLTNRTPPYGVMGGLYDALTDTDGIMYAITREEALEAKALFESLEGIDILPPSAVATASLLKAVEEGNVSKDETILLNLAGGGYKRLKEDYTLYQIEPVATAKNPDISLDELKI</sequence>
<keyword id="KW-0174">Coenzyme M biosynthesis</keyword>
<keyword id="KW-0663">Pyridoxal phosphate</keyword>
<keyword id="KW-0808">Transferase</keyword>
<comment type="function">
    <text evidence="1">Specifically catalyzes the beta-elimination of phosphate from L-phosphoserine and the beta-addition of sulfite to the dehydroalanine intermediate to produce L-cysteate.</text>
</comment>
<comment type="catalytic activity">
    <reaction evidence="1">
        <text>O-phospho-L-serine + sulfite + H(+) = L-cysteate + phosphate</text>
        <dbReference type="Rhea" id="RHEA:26486"/>
        <dbReference type="ChEBI" id="CHEBI:15378"/>
        <dbReference type="ChEBI" id="CHEBI:17359"/>
        <dbReference type="ChEBI" id="CHEBI:43474"/>
        <dbReference type="ChEBI" id="CHEBI:57524"/>
        <dbReference type="ChEBI" id="CHEBI:58090"/>
        <dbReference type="EC" id="2.5.1.76"/>
    </reaction>
</comment>
<comment type="cofactor">
    <cofactor evidence="1">
        <name>pyridoxal 5'-phosphate</name>
        <dbReference type="ChEBI" id="CHEBI:597326"/>
    </cofactor>
</comment>
<comment type="pathway">
    <text evidence="1">Cofactor biosynthesis; coenzyme M biosynthesis.</text>
</comment>
<comment type="subunit">
    <text evidence="1">Homotrimer.</text>
</comment>
<comment type="similarity">
    <text evidence="1">Belongs to the threonine synthase family. Cysteate synthase subfamily.</text>
</comment>
<organism>
    <name type="scientific">Methanosarcina barkeri (strain Fusaro / DSM 804)</name>
    <dbReference type="NCBI Taxonomy" id="269797"/>
    <lineage>
        <taxon>Archaea</taxon>
        <taxon>Methanobacteriati</taxon>
        <taxon>Methanobacteriota</taxon>
        <taxon>Stenosarchaea group</taxon>
        <taxon>Methanomicrobia</taxon>
        <taxon>Methanosarcinales</taxon>
        <taxon>Methanosarcinaceae</taxon>
        <taxon>Methanosarcina</taxon>
    </lineage>
</organism>
<reference key="1">
    <citation type="journal article" date="2006" name="J. Bacteriol.">
        <title>The Methanosarcina barkeri genome: comparative analysis with Methanosarcina acetivorans and Methanosarcina mazei reveals extensive rearrangement within methanosarcinal genomes.</title>
        <authorList>
            <person name="Maeder D.L."/>
            <person name="Anderson I."/>
            <person name="Brettin T.S."/>
            <person name="Bruce D.C."/>
            <person name="Gilna P."/>
            <person name="Han C.S."/>
            <person name="Lapidus A."/>
            <person name="Metcalf W.W."/>
            <person name="Saunders E."/>
            <person name="Tapia R."/>
            <person name="Sowers K.R."/>
        </authorList>
    </citation>
    <scope>NUCLEOTIDE SEQUENCE [LARGE SCALE GENOMIC DNA]</scope>
    <source>
        <strain>Fusaro / DSM 804</strain>
    </source>
</reference>
<accession>Q465N2</accession>
<feature type="chain" id="PRO_0000392652" description="Cysteate synthase">
    <location>
        <begin position="1"/>
        <end position="416"/>
    </location>
</feature>
<feature type="binding site" evidence="1">
    <location>
        <position position="130"/>
    </location>
    <ligand>
        <name>pyridoxal 5'-phosphate</name>
        <dbReference type="ChEBI" id="CHEBI:597326"/>
    </ligand>
</feature>
<feature type="modified residue" description="N6-(pyridoxal phosphate)lysine" evidence="1">
    <location>
        <position position="104"/>
    </location>
</feature>
<proteinExistence type="inferred from homology"/>
<name>CYAS_METBF</name>
<evidence type="ECO:0000255" key="1">
    <source>
        <dbReference type="HAMAP-Rule" id="MF_02109"/>
    </source>
</evidence>